<dbReference type="EMBL" id="U00096">
    <property type="protein sequence ID" value="AAC75163.2"/>
    <property type="molecule type" value="Genomic_DNA"/>
</dbReference>
<dbReference type="EMBL" id="AP009048">
    <property type="protein sequence ID" value="BAA15970.2"/>
    <property type="molecule type" value="Genomic_DNA"/>
</dbReference>
<dbReference type="PIR" id="E64977">
    <property type="entry name" value="E64977"/>
</dbReference>
<dbReference type="RefSeq" id="NP_416605.2">
    <property type="nucleotide sequence ID" value="NC_000913.3"/>
</dbReference>
<dbReference type="RefSeq" id="WP_001351783.1">
    <property type="nucleotide sequence ID" value="NZ_LN832404.1"/>
</dbReference>
<dbReference type="SMR" id="P76421"/>
<dbReference type="BioGRID" id="4261160">
    <property type="interactions" value="25"/>
</dbReference>
<dbReference type="FunCoup" id="P76421">
    <property type="interactions" value="72"/>
</dbReference>
<dbReference type="STRING" id="511145.b2102"/>
<dbReference type="CAZy" id="GH25">
    <property type="family name" value="Glycoside Hydrolase Family 25"/>
</dbReference>
<dbReference type="PaxDb" id="511145-b2102"/>
<dbReference type="EnsemblBacteria" id="AAC75163">
    <property type="protein sequence ID" value="AAC75163"/>
    <property type="gene ID" value="b2102"/>
</dbReference>
<dbReference type="GeneID" id="945543"/>
<dbReference type="KEGG" id="ecj:JW5345"/>
<dbReference type="KEGG" id="eco:b2102"/>
<dbReference type="KEGG" id="ecoc:C3026_11795"/>
<dbReference type="PATRIC" id="fig|1411691.4.peg.145"/>
<dbReference type="EchoBASE" id="EB3820"/>
<dbReference type="eggNOG" id="COG3757">
    <property type="taxonomic scope" value="Bacteria"/>
</dbReference>
<dbReference type="HOGENOM" id="CLU_044973_3_2_6"/>
<dbReference type="InParanoid" id="P76421"/>
<dbReference type="OMA" id="TSWWTQC"/>
<dbReference type="OrthoDB" id="9798192at2"/>
<dbReference type="PhylomeDB" id="P76421"/>
<dbReference type="BioCyc" id="EcoCyc:G7134-MONOMER"/>
<dbReference type="PRO" id="PR:P76421"/>
<dbReference type="Proteomes" id="UP000000625">
    <property type="component" value="Chromosome"/>
</dbReference>
<dbReference type="GO" id="GO:0003796">
    <property type="term" value="F:lysozyme activity"/>
    <property type="evidence" value="ECO:0007669"/>
    <property type="project" value="InterPro"/>
</dbReference>
<dbReference type="GO" id="GO:0016052">
    <property type="term" value="P:carbohydrate catabolic process"/>
    <property type="evidence" value="ECO:0000318"/>
    <property type="project" value="GO_Central"/>
</dbReference>
<dbReference type="GO" id="GO:0016998">
    <property type="term" value="P:cell wall macromolecule catabolic process"/>
    <property type="evidence" value="ECO:0007669"/>
    <property type="project" value="InterPro"/>
</dbReference>
<dbReference type="GO" id="GO:0009253">
    <property type="term" value="P:peptidoglycan catabolic process"/>
    <property type="evidence" value="ECO:0007669"/>
    <property type="project" value="InterPro"/>
</dbReference>
<dbReference type="CDD" id="cd06524">
    <property type="entry name" value="GH25_YegX-like"/>
    <property type="match status" value="1"/>
</dbReference>
<dbReference type="Gene3D" id="3.20.20.80">
    <property type="entry name" value="Glycosidases"/>
    <property type="match status" value="1"/>
</dbReference>
<dbReference type="InterPro" id="IPR002053">
    <property type="entry name" value="Glyco_hydro_25"/>
</dbReference>
<dbReference type="InterPro" id="IPR008270">
    <property type="entry name" value="Glyco_hydro_25_AS"/>
</dbReference>
<dbReference type="InterPro" id="IPR018077">
    <property type="entry name" value="Glyco_hydro_fam25_subgr"/>
</dbReference>
<dbReference type="InterPro" id="IPR017853">
    <property type="entry name" value="Glycoside_hydrolase_SF"/>
</dbReference>
<dbReference type="PANTHER" id="PTHR34135">
    <property type="entry name" value="LYSOZYME"/>
    <property type="match status" value="1"/>
</dbReference>
<dbReference type="PANTHER" id="PTHR34135:SF2">
    <property type="entry name" value="LYSOZYME"/>
    <property type="match status" value="1"/>
</dbReference>
<dbReference type="Pfam" id="PF01183">
    <property type="entry name" value="Glyco_hydro_25"/>
    <property type="match status" value="1"/>
</dbReference>
<dbReference type="SMART" id="SM00641">
    <property type="entry name" value="Glyco_25"/>
    <property type="match status" value="1"/>
</dbReference>
<dbReference type="SUPFAM" id="SSF51445">
    <property type="entry name" value="(Trans)glycosidases"/>
    <property type="match status" value="1"/>
</dbReference>
<dbReference type="PROSITE" id="PS00953">
    <property type="entry name" value="GLYCOSYL_HYDROL_F25_1"/>
    <property type="match status" value="1"/>
</dbReference>
<dbReference type="PROSITE" id="PS51904">
    <property type="entry name" value="GLYCOSYL_HYDROL_F25_2"/>
    <property type="match status" value="1"/>
</dbReference>
<keyword id="KW-0326">Glycosidase</keyword>
<keyword id="KW-0378">Hydrolase</keyword>
<keyword id="KW-1185">Reference proteome</keyword>
<feature type="chain" id="PRO_0000208266" description="Uncharacterized protein YegX">
    <location>
        <begin position="1"/>
        <end position="272"/>
    </location>
</feature>
<feature type="active site" evidence="1">
    <location>
        <position position="71"/>
    </location>
</feature>
<feature type="active site" evidence="1">
    <location>
        <position position="163"/>
    </location>
</feature>
<protein>
    <recommendedName>
        <fullName>Uncharacterized protein YegX</fullName>
    </recommendedName>
</protein>
<accession>P76421</accession>
<accession>O08480</accession>
<organism>
    <name type="scientific">Escherichia coli (strain K12)</name>
    <dbReference type="NCBI Taxonomy" id="83333"/>
    <lineage>
        <taxon>Bacteria</taxon>
        <taxon>Pseudomonadati</taxon>
        <taxon>Pseudomonadota</taxon>
        <taxon>Gammaproteobacteria</taxon>
        <taxon>Enterobacterales</taxon>
        <taxon>Enterobacteriaceae</taxon>
        <taxon>Escherichia</taxon>
    </lineage>
</organism>
<comment type="similarity">
    <text evidence="2">Belongs to the glycosyl hydrolase 25 family.</text>
</comment>
<reference key="1">
    <citation type="journal article" date="1996" name="DNA Res.">
        <title>A 460-kb DNA sequence of the Escherichia coli K-12 genome corresponding to the 40.1-50.0 min region on the linkage map.</title>
        <authorList>
            <person name="Itoh T."/>
            <person name="Aiba H."/>
            <person name="Baba T."/>
            <person name="Fujita K."/>
            <person name="Hayashi K."/>
            <person name="Inada T."/>
            <person name="Isono K."/>
            <person name="Kasai H."/>
            <person name="Kimura S."/>
            <person name="Kitakawa M."/>
            <person name="Kitagawa M."/>
            <person name="Makino K."/>
            <person name="Miki T."/>
            <person name="Mizobuchi K."/>
            <person name="Mori H."/>
            <person name="Mori T."/>
            <person name="Motomura K."/>
            <person name="Nakade S."/>
            <person name="Nakamura Y."/>
            <person name="Nashimoto H."/>
            <person name="Nishio Y."/>
            <person name="Oshima T."/>
            <person name="Saito N."/>
            <person name="Sampei G."/>
            <person name="Seki Y."/>
            <person name="Sivasundaram S."/>
            <person name="Tagami H."/>
            <person name="Takeda J."/>
            <person name="Takemoto K."/>
            <person name="Wada C."/>
            <person name="Yamamoto Y."/>
            <person name="Horiuchi T."/>
        </authorList>
    </citation>
    <scope>NUCLEOTIDE SEQUENCE [LARGE SCALE GENOMIC DNA]</scope>
    <source>
        <strain>K12 / W3110 / ATCC 27325 / DSM 5911</strain>
    </source>
</reference>
<reference key="2">
    <citation type="journal article" date="1997" name="Science">
        <title>The complete genome sequence of Escherichia coli K-12.</title>
        <authorList>
            <person name="Blattner F.R."/>
            <person name="Plunkett G. III"/>
            <person name="Bloch C.A."/>
            <person name="Perna N.T."/>
            <person name="Burland V."/>
            <person name="Riley M."/>
            <person name="Collado-Vides J."/>
            <person name="Glasner J.D."/>
            <person name="Rode C.K."/>
            <person name="Mayhew G.F."/>
            <person name="Gregor J."/>
            <person name="Davis N.W."/>
            <person name="Kirkpatrick H.A."/>
            <person name="Goeden M.A."/>
            <person name="Rose D.J."/>
            <person name="Mau B."/>
            <person name="Shao Y."/>
        </authorList>
    </citation>
    <scope>NUCLEOTIDE SEQUENCE [LARGE SCALE GENOMIC DNA]</scope>
    <source>
        <strain>K12 / MG1655 / ATCC 47076</strain>
    </source>
</reference>
<reference key="3">
    <citation type="journal article" date="2006" name="Mol. Syst. Biol.">
        <title>Highly accurate genome sequences of Escherichia coli K-12 strains MG1655 and W3110.</title>
        <authorList>
            <person name="Hayashi K."/>
            <person name="Morooka N."/>
            <person name="Yamamoto Y."/>
            <person name="Fujita K."/>
            <person name="Isono K."/>
            <person name="Choi S."/>
            <person name="Ohtsubo E."/>
            <person name="Baba T."/>
            <person name="Wanner B.L."/>
            <person name="Mori H."/>
            <person name="Horiuchi T."/>
        </authorList>
    </citation>
    <scope>NUCLEOTIDE SEQUENCE [LARGE SCALE GENOMIC DNA]</scope>
    <source>
        <strain>K12 / W3110 / ATCC 27325 / DSM 5911</strain>
    </source>
</reference>
<gene>
    <name type="primary">yegX</name>
    <name type="ordered locus">b2102</name>
    <name type="ordered locus">JW5345</name>
</gene>
<proteinExistence type="inferred from homology"/>
<sequence length="272" mass="31604">MQLRITSRKKLTSLLCALGLISIVAIYPRQTVNFFYSTAVQITDYIHFYGYRPVKSFAIRIPASYTIHGIDVSRWQERIDWQRVAKMRDNGIRLQFAFIKATEGEKLVDPYFSRNWQLSRENGLLRGAYHYFSPSVSASVQARLFLQTVDFSQGDFPAVLDVEERGKLSAKELRKRVSQWLKMVEKSTGKKPIIYSGAVFYHTNLAGYFNEYPWWVAHYYQRRPDNDGMAWRFWQHSDRGQVDGINGPVDFNVFNGTVEELQAFVDGIKETP</sequence>
<evidence type="ECO:0000255" key="1">
    <source>
        <dbReference type="PROSITE-ProRule" id="PRU10065"/>
    </source>
</evidence>
<evidence type="ECO:0000305" key="2"/>
<name>YEGX_ECOLI</name>